<organism>
    <name type="scientific">Abelson murine leukemia virus</name>
    <dbReference type="NCBI Taxonomy" id="11788"/>
    <lineage>
        <taxon>Viruses</taxon>
        <taxon>Riboviria</taxon>
        <taxon>Pararnavirae</taxon>
        <taxon>Artverviricota</taxon>
        <taxon>Revtraviricetes</taxon>
        <taxon>Ortervirales</taxon>
        <taxon>Retroviridae</taxon>
        <taxon>Orthoretrovirinae</taxon>
        <taxon>Gammaretrovirus</taxon>
    </lineage>
</organism>
<keyword id="KW-0167">Capsid protein</keyword>
<keyword id="KW-0945">Host-virus interaction</keyword>
<keyword id="KW-0449">Lipoprotein</keyword>
<keyword id="KW-0519">Myristate</keyword>
<keyword id="KW-1198">Viral budding</keyword>
<keyword id="KW-1187">Viral budding via the host ESCRT complexes</keyword>
<keyword id="KW-1188">Viral release from host cell</keyword>
<keyword id="KW-0946">Virion</keyword>
<sequence>MGQTVTTPLSLTLGHWKDVERIAHNQSVDVKKRRWVTFCSAEWPTFNVGWPRDGTFNRDLITQVKIKVFSPGPHGHPDQVPYIVTWEALAFDPPPWVKPFVHPKPPPPLPPSAPSLPLEPPLSTPPRSSLYPALTPSLGAKPKPQVLSDSGGPLIDLLTEDPPPYRDPRPPPSDRDGNGGEATPAGEAPDPSPMASRLRGRREPPVADSTTSQAFPLRTGGNGQLQYWPFSSSDL</sequence>
<proteinExistence type="inferred from homology"/>
<protein>
    <recommendedName>
        <fullName>Gag polyprotein</fullName>
    </recommendedName>
    <component>
        <recommendedName>
            <fullName>Matrix protein p15</fullName>
            <shortName>MA</shortName>
        </recommendedName>
    </component>
    <component>
        <recommendedName>
            <fullName>RNA-binding phosphoprotein p12</fullName>
        </recommendedName>
    </component>
    <component>
        <recommendedName>
            <fullName>Capsid protein p30</fullName>
            <shortName>CA</shortName>
        </recommendedName>
    </component>
</protein>
<dbReference type="EMBL" id="V01541">
    <property type="protein sequence ID" value="CAA24781.1"/>
    <property type="molecule type" value="Genomic_DNA"/>
</dbReference>
<dbReference type="BMRB" id="P03333"/>
<dbReference type="SMR" id="P03333"/>
<dbReference type="IntAct" id="P03333">
    <property type="interactions" value="1"/>
</dbReference>
<dbReference type="MINT" id="P03333"/>
<dbReference type="GO" id="GO:0019028">
    <property type="term" value="C:viral capsid"/>
    <property type="evidence" value="ECO:0007669"/>
    <property type="project" value="UniProtKB-KW"/>
</dbReference>
<dbReference type="GO" id="GO:0039702">
    <property type="term" value="P:viral budding via host ESCRT complex"/>
    <property type="evidence" value="ECO:0007669"/>
    <property type="project" value="UniProtKB-KW"/>
</dbReference>
<dbReference type="FunFam" id="1.10.150.180:FF:000001">
    <property type="entry name" value="Gag polyprotein"/>
    <property type="match status" value="1"/>
</dbReference>
<dbReference type="Gene3D" id="1.10.150.180">
    <property type="entry name" value="Gamma-retroviral matrix domain"/>
    <property type="match status" value="1"/>
</dbReference>
<dbReference type="InterPro" id="IPR000840">
    <property type="entry name" value="G_retro_matrix"/>
</dbReference>
<dbReference type="InterPro" id="IPR036946">
    <property type="entry name" value="G_retro_matrix_sf"/>
</dbReference>
<dbReference type="InterPro" id="IPR002079">
    <property type="entry name" value="Gag_p12"/>
</dbReference>
<dbReference type="InterPro" id="IPR050462">
    <property type="entry name" value="Retroviral_Gag-Pol_poly"/>
</dbReference>
<dbReference type="InterPro" id="IPR010999">
    <property type="entry name" value="Retrovr_matrix"/>
</dbReference>
<dbReference type="PANTHER" id="PTHR33166">
    <property type="entry name" value="GAG_P30 DOMAIN-CONTAINING PROTEIN"/>
    <property type="match status" value="1"/>
</dbReference>
<dbReference type="Pfam" id="PF01140">
    <property type="entry name" value="Gag_MA"/>
    <property type="match status" value="1"/>
</dbReference>
<dbReference type="Pfam" id="PF01141">
    <property type="entry name" value="Gag_p12"/>
    <property type="match status" value="1"/>
</dbReference>
<dbReference type="SUPFAM" id="SSF47836">
    <property type="entry name" value="Retroviral matrix proteins"/>
    <property type="match status" value="1"/>
</dbReference>
<gene>
    <name type="primary">gag</name>
</gene>
<organismHost>
    <name type="scientific">Mus musculus</name>
    <name type="common">Mouse</name>
    <dbReference type="NCBI Taxonomy" id="10090"/>
</organismHost>
<accession>P03333</accession>
<name>GAG_MLVAB</name>
<feature type="initiator methionine" description="Removed; by host" evidence="1">
    <location>
        <position position="1"/>
    </location>
</feature>
<feature type="chain" id="PRO_0000040873" description="Matrix protein p15">
    <location>
        <begin position="2"/>
        <end position="131"/>
    </location>
</feature>
<feature type="chain" id="PRO_0000040874" description="RNA-binding phosphoprotein p12">
    <location>
        <begin position="132"/>
        <end position="215"/>
    </location>
</feature>
<feature type="chain" id="PRO_0000040875" description="Capsid protein p30">
    <location>
        <begin position="216"/>
        <end position="235"/>
    </location>
</feature>
<feature type="region of interest" description="Disordered" evidence="3">
    <location>
        <begin position="108"/>
        <end position="235"/>
    </location>
</feature>
<feature type="short sequence motif" description="PPPY motif" evidence="2">
    <location>
        <begin position="162"/>
        <end position="165"/>
    </location>
</feature>
<feature type="short sequence motif" description="PPXY motif" evidence="2">
    <location>
        <begin position="162"/>
        <end position="165"/>
    </location>
</feature>
<feature type="compositionally biased region" description="Pro residues" evidence="3">
    <location>
        <begin position="108"/>
        <end position="124"/>
    </location>
</feature>
<feature type="compositionally biased region" description="Basic and acidic residues" evidence="3">
    <location>
        <begin position="163"/>
        <end position="178"/>
    </location>
</feature>
<feature type="lipid moiety-binding region" description="N-myristoyl glycine; by host" evidence="1">
    <location>
        <position position="2"/>
    </location>
</feature>
<comment type="function">
    <text evidence="1">Matrix protein p15 targets Gag and gag-pol polyproteins to the plasma membrane via a multipartite membrane binding signal, that includes its myristoylated N-terminus. Also mediates nuclear localization of the preintegration complex (By similarity).</text>
</comment>
<comment type="function">
    <text evidence="1">Capsid protein p30 forms the spherical core of the virus that encapsulates the genomic RNA-nucleocapsid complex.</text>
</comment>
<comment type="subcellular location">
    <molecule>Matrix protein p15</molecule>
    <subcellularLocation>
        <location evidence="4">Virion</location>
    </subcellularLocation>
</comment>
<comment type="subcellular location">
    <molecule>Capsid protein p30</molecule>
    <subcellularLocation>
        <location evidence="4">Virion</location>
    </subcellularLocation>
</comment>
<comment type="domain">
    <text evidence="4">Late-budding domains (L domains) are short sequence motifs essential for viral particle budding. They recruit proteins of the host ESCRT machinery (Endosomal Sorting Complex Required for Transport) or ESCRT-associated proteins. Gag-p12 contains one L domain: a PPXY motif which potentially interacts with the WW domain 3 of NEDD4 E3 ubiquitin ligase (Potential).</text>
</comment>
<comment type="PTM">
    <text>Specific enzymatic cleavages in vivo yield mature proteins.</text>
</comment>
<comment type="miscellaneous">
    <text>This protein is synthesized as a Gag-Abl polyprotein.</text>
</comment>
<reference key="1">
    <citation type="journal article" date="1983" name="Proc. Natl. Acad. Sci. U.S.A.">
        <title>Nucleotide sequence of Abelson murine leukemia virus genome: structural similarity of its transforming gene product to other onc gene products with tyrosine-specific kinase activity.</title>
        <authorList>
            <person name="Reddy E.P."/>
            <person name="Smith M.J."/>
            <person name="Srinivasan A."/>
        </authorList>
    </citation>
    <scope>NUCLEOTIDE SEQUENCE [GENOMIC DNA]</scope>
</reference>
<evidence type="ECO:0000250" key="1"/>
<evidence type="ECO:0000255" key="2"/>
<evidence type="ECO:0000256" key="3">
    <source>
        <dbReference type="SAM" id="MobiDB-lite"/>
    </source>
</evidence>
<evidence type="ECO:0000305" key="4"/>